<feature type="chain" id="PRO_0000225032" description="UDP-N-acetylglucosamine--N-acetylmuramyl-(pentapeptide) pyrophosphoryl-undecaprenol N-acetylglucosamine transferase">
    <location>
        <begin position="1"/>
        <end position="357"/>
    </location>
</feature>
<feature type="binding site" evidence="1">
    <location>
        <begin position="14"/>
        <end position="16"/>
    </location>
    <ligand>
        <name>UDP-N-acetyl-alpha-D-glucosamine</name>
        <dbReference type="ChEBI" id="CHEBI:57705"/>
    </ligand>
</feature>
<feature type="binding site" evidence="1">
    <location>
        <position position="128"/>
    </location>
    <ligand>
        <name>UDP-N-acetyl-alpha-D-glucosamine</name>
        <dbReference type="ChEBI" id="CHEBI:57705"/>
    </ligand>
</feature>
<feature type="binding site" evidence="1">
    <location>
        <position position="169"/>
    </location>
    <ligand>
        <name>UDP-N-acetyl-alpha-D-glucosamine</name>
        <dbReference type="ChEBI" id="CHEBI:57705"/>
    </ligand>
</feature>
<feature type="binding site" evidence="1">
    <location>
        <position position="193"/>
    </location>
    <ligand>
        <name>UDP-N-acetyl-alpha-D-glucosamine</name>
        <dbReference type="ChEBI" id="CHEBI:57705"/>
    </ligand>
</feature>
<feature type="binding site" evidence="1">
    <location>
        <position position="248"/>
    </location>
    <ligand>
        <name>UDP-N-acetyl-alpha-D-glucosamine</name>
        <dbReference type="ChEBI" id="CHEBI:57705"/>
    </ligand>
</feature>
<feature type="binding site" evidence="1">
    <location>
        <position position="292"/>
    </location>
    <ligand>
        <name>UDP-N-acetyl-alpha-D-glucosamine</name>
        <dbReference type="ChEBI" id="CHEBI:57705"/>
    </ligand>
</feature>
<proteinExistence type="inferred from homology"/>
<evidence type="ECO:0000255" key="1">
    <source>
        <dbReference type="HAMAP-Rule" id="MF_00033"/>
    </source>
</evidence>
<organism>
    <name type="scientific">Bdellovibrio bacteriovorus (strain ATCC 15356 / DSM 50701 / NCIMB 9529 / HD100)</name>
    <dbReference type="NCBI Taxonomy" id="264462"/>
    <lineage>
        <taxon>Bacteria</taxon>
        <taxon>Pseudomonadati</taxon>
        <taxon>Bdellovibrionota</taxon>
        <taxon>Bdellovibrionia</taxon>
        <taxon>Bdellovibrionales</taxon>
        <taxon>Pseudobdellovibrionaceae</taxon>
        <taxon>Bdellovibrio</taxon>
    </lineage>
</organism>
<sequence length="357" mass="38880">MTVKKNIVIAGGGTGGHIYPGIAIARALQKLDPSIEVHFVGTARGLESKIVPREGFPLHLIESGQLNVKSPIQKMKTLLKIPVGLWQSIRLLGQLKPLYVIGVGGYASGPFVLAASIIGFNTAVWEPNAMPGMANRILSRFVDKCFVVFNEAKKHLKGDSIIQTGMPVRAEIEAAVHDSSENQKFHLLAFGGSQGSRIINNCLSDAVLGGGDWVKDLSVVHQLGSADFQAVSEKYKNAPCEVQPFEFIYDMAKYYQWADIIVCRGGASSIAEAAAFGIIPIIVPLPAADNHQQKNAESLVEKNAGRMILQKDLTPERLISEVQSLRADKALREQMVRNIKNFYIPQSATVIAKEILQ</sequence>
<gene>
    <name evidence="1" type="primary">murG</name>
    <name type="ordered locus">Bd3197</name>
</gene>
<name>MURG_BDEBA</name>
<dbReference type="EC" id="2.4.1.227" evidence="1"/>
<dbReference type="EMBL" id="BX842654">
    <property type="protein sequence ID" value="CAE80952.1"/>
    <property type="molecule type" value="Genomic_DNA"/>
</dbReference>
<dbReference type="RefSeq" id="WP_011165556.1">
    <property type="nucleotide sequence ID" value="NC_005363.1"/>
</dbReference>
<dbReference type="SMR" id="Q6MIG1"/>
<dbReference type="STRING" id="264462.Bd3197"/>
<dbReference type="CAZy" id="GT28">
    <property type="family name" value="Glycosyltransferase Family 28"/>
</dbReference>
<dbReference type="GeneID" id="93014039"/>
<dbReference type="KEGG" id="bba:Bd3197"/>
<dbReference type="eggNOG" id="COG0707">
    <property type="taxonomic scope" value="Bacteria"/>
</dbReference>
<dbReference type="HOGENOM" id="CLU_037404_0_1_7"/>
<dbReference type="UniPathway" id="UPA00219"/>
<dbReference type="Proteomes" id="UP000008080">
    <property type="component" value="Chromosome"/>
</dbReference>
<dbReference type="GO" id="GO:0005886">
    <property type="term" value="C:plasma membrane"/>
    <property type="evidence" value="ECO:0007669"/>
    <property type="project" value="UniProtKB-SubCell"/>
</dbReference>
<dbReference type="GO" id="GO:0051991">
    <property type="term" value="F:UDP-N-acetyl-D-glucosamine:N-acetylmuramoyl-L-alanyl-D-glutamyl-meso-2,6-diaminopimelyl-D-alanyl-D-alanine-diphosphoundecaprenol 4-beta-N-acetylglucosaminlytransferase activity"/>
    <property type="evidence" value="ECO:0007669"/>
    <property type="project" value="RHEA"/>
</dbReference>
<dbReference type="GO" id="GO:0050511">
    <property type="term" value="F:undecaprenyldiphospho-muramoylpentapeptide beta-N-acetylglucosaminyltransferase activity"/>
    <property type="evidence" value="ECO:0007669"/>
    <property type="project" value="UniProtKB-UniRule"/>
</dbReference>
<dbReference type="GO" id="GO:0005975">
    <property type="term" value="P:carbohydrate metabolic process"/>
    <property type="evidence" value="ECO:0007669"/>
    <property type="project" value="InterPro"/>
</dbReference>
<dbReference type="GO" id="GO:0051301">
    <property type="term" value="P:cell division"/>
    <property type="evidence" value="ECO:0007669"/>
    <property type="project" value="UniProtKB-KW"/>
</dbReference>
<dbReference type="GO" id="GO:0071555">
    <property type="term" value="P:cell wall organization"/>
    <property type="evidence" value="ECO:0007669"/>
    <property type="project" value="UniProtKB-KW"/>
</dbReference>
<dbReference type="GO" id="GO:0030259">
    <property type="term" value="P:lipid glycosylation"/>
    <property type="evidence" value="ECO:0007669"/>
    <property type="project" value="UniProtKB-UniRule"/>
</dbReference>
<dbReference type="GO" id="GO:0009252">
    <property type="term" value="P:peptidoglycan biosynthetic process"/>
    <property type="evidence" value="ECO:0007669"/>
    <property type="project" value="UniProtKB-UniRule"/>
</dbReference>
<dbReference type="GO" id="GO:0008360">
    <property type="term" value="P:regulation of cell shape"/>
    <property type="evidence" value="ECO:0007669"/>
    <property type="project" value="UniProtKB-KW"/>
</dbReference>
<dbReference type="CDD" id="cd03785">
    <property type="entry name" value="GT28_MurG"/>
    <property type="match status" value="1"/>
</dbReference>
<dbReference type="Gene3D" id="3.40.50.2000">
    <property type="entry name" value="Glycogen Phosphorylase B"/>
    <property type="match status" value="2"/>
</dbReference>
<dbReference type="HAMAP" id="MF_00033">
    <property type="entry name" value="MurG"/>
    <property type="match status" value="1"/>
</dbReference>
<dbReference type="InterPro" id="IPR006009">
    <property type="entry name" value="GlcNAc_MurG"/>
</dbReference>
<dbReference type="InterPro" id="IPR007235">
    <property type="entry name" value="Glyco_trans_28_C"/>
</dbReference>
<dbReference type="InterPro" id="IPR004276">
    <property type="entry name" value="GlycoTrans_28_N"/>
</dbReference>
<dbReference type="NCBIfam" id="TIGR01133">
    <property type="entry name" value="murG"/>
    <property type="match status" value="1"/>
</dbReference>
<dbReference type="PANTHER" id="PTHR21015:SF22">
    <property type="entry name" value="GLYCOSYLTRANSFERASE"/>
    <property type="match status" value="1"/>
</dbReference>
<dbReference type="PANTHER" id="PTHR21015">
    <property type="entry name" value="UDP-N-ACETYLGLUCOSAMINE--N-ACETYLMURAMYL-(PENTAPEPTIDE) PYROPHOSPHORYL-UNDECAPRENOL N-ACETYLGLUCOSAMINE TRANSFERASE 1"/>
    <property type="match status" value="1"/>
</dbReference>
<dbReference type="Pfam" id="PF04101">
    <property type="entry name" value="Glyco_tran_28_C"/>
    <property type="match status" value="1"/>
</dbReference>
<dbReference type="Pfam" id="PF03033">
    <property type="entry name" value="Glyco_transf_28"/>
    <property type="match status" value="1"/>
</dbReference>
<dbReference type="SUPFAM" id="SSF53756">
    <property type="entry name" value="UDP-Glycosyltransferase/glycogen phosphorylase"/>
    <property type="match status" value="1"/>
</dbReference>
<keyword id="KW-0131">Cell cycle</keyword>
<keyword id="KW-0132">Cell division</keyword>
<keyword id="KW-0997">Cell inner membrane</keyword>
<keyword id="KW-1003">Cell membrane</keyword>
<keyword id="KW-0133">Cell shape</keyword>
<keyword id="KW-0961">Cell wall biogenesis/degradation</keyword>
<keyword id="KW-0328">Glycosyltransferase</keyword>
<keyword id="KW-0472">Membrane</keyword>
<keyword id="KW-0573">Peptidoglycan synthesis</keyword>
<keyword id="KW-1185">Reference proteome</keyword>
<keyword id="KW-0808">Transferase</keyword>
<comment type="function">
    <text evidence="1">Cell wall formation. Catalyzes the transfer of a GlcNAc subunit on undecaprenyl-pyrophosphoryl-MurNAc-pentapeptide (lipid intermediate I) to form undecaprenyl-pyrophosphoryl-MurNAc-(pentapeptide)GlcNAc (lipid intermediate II).</text>
</comment>
<comment type="catalytic activity">
    <reaction evidence="1">
        <text>di-trans,octa-cis-undecaprenyl diphospho-N-acetyl-alpha-D-muramoyl-L-alanyl-D-glutamyl-meso-2,6-diaminopimeloyl-D-alanyl-D-alanine + UDP-N-acetyl-alpha-D-glucosamine = di-trans,octa-cis-undecaprenyl diphospho-[N-acetyl-alpha-D-glucosaminyl-(1-&gt;4)]-N-acetyl-alpha-D-muramoyl-L-alanyl-D-glutamyl-meso-2,6-diaminopimeloyl-D-alanyl-D-alanine + UDP + H(+)</text>
        <dbReference type="Rhea" id="RHEA:31227"/>
        <dbReference type="ChEBI" id="CHEBI:15378"/>
        <dbReference type="ChEBI" id="CHEBI:57705"/>
        <dbReference type="ChEBI" id="CHEBI:58223"/>
        <dbReference type="ChEBI" id="CHEBI:61387"/>
        <dbReference type="ChEBI" id="CHEBI:61388"/>
        <dbReference type="EC" id="2.4.1.227"/>
    </reaction>
</comment>
<comment type="pathway">
    <text evidence="1">Cell wall biogenesis; peptidoglycan biosynthesis.</text>
</comment>
<comment type="subcellular location">
    <subcellularLocation>
        <location evidence="1">Cell inner membrane</location>
        <topology evidence="1">Peripheral membrane protein</topology>
        <orientation evidence="1">Cytoplasmic side</orientation>
    </subcellularLocation>
</comment>
<comment type="similarity">
    <text evidence="1">Belongs to the glycosyltransferase 28 family. MurG subfamily.</text>
</comment>
<protein>
    <recommendedName>
        <fullName evidence="1">UDP-N-acetylglucosamine--N-acetylmuramyl-(pentapeptide) pyrophosphoryl-undecaprenol N-acetylglucosamine transferase</fullName>
        <ecNumber evidence="1">2.4.1.227</ecNumber>
    </recommendedName>
    <alternativeName>
        <fullName evidence="1">Undecaprenyl-PP-MurNAc-pentapeptide-UDPGlcNAc GlcNAc transferase</fullName>
    </alternativeName>
</protein>
<reference key="1">
    <citation type="journal article" date="2004" name="Science">
        <title>A predator unmasked: life cycle of Bdellovibrio bacteriovorus from a genomic perspective.</title>
        <authorList>
            <person name="Rendulic S."/>
            <person name="Jagtap P."/>
            <person name="Rosinus A."/>
            <person name="Eppinger M."/>
            <person name="Baar C."/>
            <person name="Lanz C."/>
            <person name="Keller H."/>
            <person name="Lambert C."/>
            <person name="Evans K.J."/>
            <person name="Goesmann A."/>
            <person name="Meyer F."/>
            <person name="Sockett R.E."/>
            <person name="Schuster S.C."/>
        </authorList>
    </citation>
    <scope>NUCLEOTIDE SEQUENCE [LARGE SCALE GENOMIC DNA]</scope>
    <source>
        <strain>ATCC 15356 / DSM 50701 / NCIMB 9529 / HD100</strain>
    </source>
</reference>
<accession>Q6MIG1</accession>